<accession>P85429</accession>
<reference key="1">
    <citation type="journal article" date="2008" name="J. Mol. Recognit.">
        <title>Biomimetic affinity purification of cardiotoxin and its pharmacological effects on the nervous system.</title>
        <authorList>
            <person name="Dong D."/>
            <person name="Liu H."/>
            <person name="Xiao Q."/>
            <person name="Wang T."/>
            <person name="Liu H."/>
            <person name="Li R."/>
        </authorList>
    </citation>
    <scope>PROTEIN SEQUENCE</scope>
    <scope>SUBCELLULAR LOCATION</scope>
    <scope>MASS SPECTROMETRY</scope>
    <scope>TOXIC DOSE</scope>
    <source>
        <tissue>Venom</tissue>
    </source>
</reference>
<evidence type="ECO:0000250" key="1">
    <source>
        <dbReference type="UniProtKB" id="P01442"/>
    </source>
</evidence>
<evidence type="ECO:0000250" key="2">
    <source>
        <dbReference type="UniProtKB" id="P60301"/>
    </source>
</evidence>
<evidence type="ECO:0000250" key="3">
    <source>
        <dbReference type="UniProtKB" id="P60304"/>
    </source>
</evidence>
<evidence type="ECO:0000269" key="4">
    <source>
    </source>
</evidence>
<evidence type="ECO:0000305" key="5"/>
<dbReference type="TCDB" id="1.C.74.1.9">
    <property type="family name" value="the snake cytotoxin (sct) family"/>
</dbReference>
<dbReference type="GO" id="GO:0005576">
    <property type="term" value="C:extracellular region"/>
    <property type="evidence" value="ECO:0007669"/>
    <property type="project" value="UniProtKB-SubCell"/>
</dbReference>
<dbReference type="GO" id="GO:0016020">
    <property type="term" value="C:membrane"/>
    <property type="evidence" value="ECO:0007669"/>
    <property type="project" value="UniProtKB-KW"/>
</dbReference>
<dbReference type="GO" id="GO:0044218">
    <property type="term" value="C:other organism cell membrane"/>
    <property type="evidence" value="ECO:0007669"/>
    <property type="project" value="UniProtKB-KW"/>
</dbReference>
<dbReference type="GO" id="GO:0090729">
    <property type="term" value="F:toxin activity"/>
    <property type="evidence" value="ECO:0007669"/>
    <property type="project" value="UniProtKB-KW"/>
</dbReference>
<dbReference type="GO" id="GO:0031640">
    <property type="term" value="P:killing of cells of another organism"/>
    <property type="evidence" value="ECO:0007669"/>
    <property type="project" value="UniProtKB-KW"/>
</dbReference>
<keyword id="KW-0123">Cardiotoxin</keyword>
<keyword id="KW-0204">Cytolysis</keyword>
<keyword id="KW-0903">Direct protein sequencing</keyword>
<keyword id="KW-1015">Disulfide bond</keyword>
<keyword id="KW-0472">Membrane</keyword>
<keyword id="KW-0964">Secreted</keyword>
<keyword id="KW-1052">Target cell membrane</keyword>
<keyword id="KW-1053">Target membrane</keyword>
<keyword id="KW-0800">Toxin</keyword>
<feature type="chain" id="PRO_0000320216" description="Cytotoxin 1f" evidence="4">
    <location>
        <begin position="1"/>
        <end position="15" status="greater than"/>
    </location>
</feature>
<feature type="disulfide bond" evidence="1">
    <location>
        <begin position="3"/>
        <end status="unknown"/>
    </location>
</feature>
<feature type="disulfide bond" evidence="1">
    <location>
        <begin position="14"/>
        <end status="unknown"/>
    </location>
</feature>
<feature type="non-terminal residue">
    <location>
        <position position="15"/>
    </location>
</feature>
<comment type="function">
    <text evidence="2 3">Shows cytolytic activity on many different cells by forming pore in lipid membranes. In vivo, increases heart rate or kills the animal by cardiac arrest. In addition, it binds to heparin with high affinity, interacts with Kv channel-interacting protein 1 (KCNIP1) in a calcium-independent manner, and binds to integrin alpha-V/beta-3 (ITGAV/ITGB3) with moderate affinity.</text>
</comment>
<comment type="subunit">
    <text evidence="2">Monomer in solution; Homodimer and oligomer in the presence of negatively charged lipids forming a pore with a size ranging between 20 and 30 Angstroms.</text>
</comment>
<comment type="subcellular location">
    <subcellularLocation>
        <location evidence="4">Secreted</location>
    </subcellularLocation>
    <subcellularLocation>
        <location evidence="2">Target cell membrane</location>
    </subcellularLocation>
</comment>
<comment type="tissue specificity">
    <text evidence="5">Expressed by the venom gland.</text>
</comment>
<comment type="mass spectrometry" mass="6800.0" method="MALDI" evidence="4"/>
<comment type="toxic dose">
    <text evidence="4">LD(50) is 2.17 mg/kg by intraperitoneal injection in mice.</text>
</comment>
<comment type="similarity">
    <text evidence="5">Belongs to the three-finger toxin family. Short-chain subfamily. Type IA cytotoxin sub-subfamily.</text>
</comment>
<organism>
    <name type="scientific">Naja atra</name>
    <name type="common">Chinese cobra</name>
    <dbReference type="NCBI Taxonomy" id="8656"/>
    <lineage>
        <taxon>Eukaryota</taxon>
        <taxon>Metazoa</taxon>
        <taxon>Chordata</taxon>
        <taxon>Craniata</taxon>
        <taxon>Vertebrata</taxon>
        <taxon>Euteleostomi</taxon>
        <taxon>Lepidosauria</taxon>
        <taxon>Squamata</taxon>
        <taxon>Bifurcata</taxon>
        <taxon>Unidentata</taxon>
        <taxon>Episquamata</taxon>
        <taxon>Toxicofera</taxon>
        <taxon>Serpentes</taxon>
        <taxon>Colubroidea</taxon>
        <taxon>Elapidae</taxon>
        <taxon>Elapinae</taxon>
        <taxon>Naja</taxon>
    </lineage>
</organism>
<proteinExistence type="evidence at protein level"/>
<protein>
    <recommendedName>
        <fullName>Cytotoxin 1f</fullName>
    </recommendedName>
    <alternativeName>
        <fullName>Cardiotoxin 1f</fullName>
    </alternativeName>
</protein>
<name>3SA1F_NAJAT</name>
<sequence length="15" mass="1767">LKCNKLVPLFYKTCP</sequence>